<dbReference type="EMBL" id="AE008384">
    <property type="protein sequence ID" value="AAM31144.1"/>
    <property type="status" value="ALT_INIT"/>
    <property type="molecule type" value="Genomic_DNA"/>
</dbReference>
<dbReference type="RefSeq" id="WP_048046011.1">
    <property type="nucleotide sequence ID" value="NC_003901.1"/>
</dbReference>
<dbReference type="KEGG" id="mma:MM_1448"/>
<dbReference type="PATRIC" id="fig|192952.21.peg.1674"/>
<dbReference type="eggNOG" id="arCOG02239">
    <property type="taxonomic scope" value="Archaea"/>
</dbReference>
<dbReference type="HOGENOM" id="CLU_094511_0_0_2"/>
<dbReference type="Proteomes" id="UP000000595">
    <property type="component" value="Chromosome"/>
</dbReference>
<dbReference type="Gene3D" id="1.10.10.60">
    <property type="entry name" value="Homeodomain-like"/>
    <property type="match status" value="1"/>
</dbReference>
<dbReference type="HAMAP" id="MF_00674">
    <property type="entry name" value="UPF0251"/>
    <property type="match status" value="1"/>
</dbReference>
<dbReference type="InterPro" id="IPR013324">
    <property type="entry name" value="RNA_pol_sigma_r3/r4-like"/>
</dbReference>
<dbReference type="InterPro" id="IPR002852">
    <property type="entry name" value="UPF0251"/>
</dbReference>
<dbReference type="PANTHER" id="PTHR37478">
    <property type="match status" value="1"/>
</dbReference>
<dbReference type="PANTHER" id="PTHR37478:SF2">
    <property type="entry name" value="UPF0251 PROTEIN TK0562"/>
    <property type="match status" value="1"/>
</dbReference>
<dbReference type="Pfam" id="PF02001">
    <property type="entry name" value="DUF134"/>
    <property type="match status" value="1"/>
</dbReference>
<dbReference type="SUPFAM" id="SSF88659">
    <property type="entry name" value="Sigma3 and sigma4 domains of RNA polymerase sigma factors"/>
    <property type="match status" value="1"/>
</dbReference>
<reference key="1">
    <citation type="journal article" date="2002" name="J. Mol. Microbiol. Biotechnol.">
        <title>The genome of Methanosarcina mazei: evidence for lateral gene transfer between Bacteria and Archaea.</title>
        <authorList>
            <person name="Deppenmeier U."/>
            <person name="Johann A."/>
            <person name="Hartsch T."/>
            <person name="Merkl R."/>
            <person name="Schmitz R.A."/>
            <person name="Martinez-Arias R."/>
            <person name="Henne A."/>
            <person name="Wiezer A."/>
            <person name="Baeumer S."/>
            <person name="Jacobi C."/>
            <person name="Brueggemann H."/>
            <person name="Lienard T."/>
            <person name="Christmann A."/>
            <person name="Boemecke M."/>
            <person name="Steckel S."/>
            <person name="Bhattacharyya A."/>
            <person name="Lykidis A."/>
            <person name="Overbeek R."/>
            <person name="Klenk H.-P."/>
            <person name="Gunsalus R.P."/>
            <person name="Fritz H.-J."/>
            <person name="Gottschalk G."/>
        </authorList>
    </citation>
    <scope>NUCLEOTIDE SEQUENCE [LARGE SCALE GENOMIC DNA]</scope>
    <source>
        <strain>ATCC BAA-159 / DSM 3647 / Goe1 / Go1 / JCM 11833 / OCM 88</strain>
    </source>
</reference>
<comment type="similarity">
    <text evidence="2">Belongs to the UPF0251 family.</text>
</comment>
<comment type="sequence caution" evidence="2">
    <conflict type="erroneous initiation">
        <sequence resource="EMBL-CDS" id="AAM31144"/>
    </conflict>
</comment>
<gene>
    <name type="ordered locus">MM_1448</name>
</gene>
<accession>Q8PWX8</accession>
<protein>
    <recommendedName>
        <fullName>UPF0251 protein MM_1448</fullName>
    </recommendedName>
</protein>
<name>Y1448_METMA</name>
<sequence length="164" mass="18017">MRPRKRRMVDFEHPERQFRPFSPESEISEEILLTIDELEAMRLSFLENLSQTEAAARMEIHQSTFQRALKKALEKVTDALVHGKAIRIEGGDYRMPRGDRTGPAGQGPAGGGRGRGQGKGRGGRFGGPEGNCICTACGYETPHTPGVSCSQVKCEKCGSPMVRK</sequence>
<organism>
    <name type="scientific">Methanosarcina mazei (strain ATCC BAA-159 / DSM 3647 / Goe1 / Go1 / JCM 11833 / OCM 88)</name>
    <name type="common">Methanosarcina frisia</name>
    <dbReference type="NCBI Taxonomy" id="192952"/>
    <lineage>
        <taxon>Archaea</taxon>
        <taxon>Methanobacteriati</taxon>
        <taxon>Methanobacteriota</taxon>
        <taxon>Stenosarchaea group</taxon>
        <taxon>Methanomicrobia</taxon>
        <taxon>Methanosarcinales</taxon>
        <taxon>Methanosarcinaceae</taxon>
        <taxon>Methanosarcina</taxon>
    </lineage>
</organism>
<proteinExistence type="inferred from homology"/>
<evidence type="ECO:0000256" key="1">
    <source>
        <dbReference type="SAM" id="MobiDB-lite"/>
    </source>
</evidence>
<evidence type="ECO:0000305" key="2"/>
<feature type="chain" id="PRO_0000147578" description="UPF0251 protein MM_1448">
    <location>
        <begin position="1"/>
        <end position="164"/>
    </location>
</feature>
<feature type="region of interest" description="Disordered" evidence="1">
    <location>
        <begin position="91"/>
        <end position="123"/>
    </location>
</feature>
<feature type="compositionally biased region" description="Basic and acidic residues" evidence="1">
    <location>
        <begin position="91"/>
        <end position="100"/>
    </location>
</feature>
<feature type="compositionally biased region" description="Gly residues" evidence="1">
    <location>
        <begin position="104"/>
        <end position="115"/>
    </location>
</feature>